<organism>
    <name type="scientific">Mycobacterium marinum (strain ATCC BAA-535 / M)</name>
    <dbReference type="NCBI Taxonomy" id="216594"/>
    <lineage>
        <taxon>Bacteria</taxon>
        <taxon>Bacillati</taxon>
        <taxon>Actinomycetota</taxon>
        <taxon>Actinomycetes</taxon>
        <taxon>Mycobacteriales</taxon>
        <taxon>Mycobacteriaceae</taxon>
        <taxon>Mycobacterium</taxon>
        <taxon>Mycobacterium ulcerans group</taxon>
    </lineage>
</organism>
<proteinExistence type="inferred from homology"/>
<evidence type="ECO:0000255" key="1">
    <source>
        <dbReference type="HAMAP-Rule" id="MF_01283"/>
    </source>
</evidence>
<name>RIBBA_MYCMM</name>
<sequence length="425" mass="46040">MTRLDSVERAVADIGAGKAVIVIDDEDRENEGDLIFAAEKATPELVAFMVRYTSGYLCVPLDGAVCDRLGLLPMYAVNQDKHGTAYTVTVDAKNGVGTGISASDRATTMRLLADPASVAEDFTRPGHVVPLRAKDGGVLRRPGHTEAAVDLARMAGLQPAGAICEIVSQKDEGSMAQTDELRVFADEHGLALITIADLIEWRRKHEKHIERVAEARIPTRHGEFRAIGYTSIYEDVEHVALVRGEIAGPNSDGDDVLVRVHSECLTGDVFGSRRCDCGPQLDAAMAMVAREGRGVVLYMRGHEGRGIGLLHKLQAYQLQDAGDDTVDANLKLGLPADARDYGIGAQILVDLGVRSMRLLTNNPAKRVGLDGYGLHIIERVPLPVRANAENIRYLMTKRDRMGHDLTGLDDFHESVHLPGEFGGAL</sequence>
<keyword id="KW-0342">GTP-binding</keyword>
<keyword id="KW-0378">Hydrolase</keyword>
<keyword id="KW-0456">Lyase</keyword>
<keyword id="KW-0460">Magnesium</keyword>
<keyword id="KW-0464">Manganese</keyword>
<keyword id="KW-0479">Metal-binding</keyword>
<keyword id="KW-0511">Multifunctional enzyme</keyword>
<keyword id="KW-0547">Nucleotide-binding</keyword>
<keyword id="KW-1185">Reference proteome</keyword>
<keyword id="KW-0686">Riboflavin biosynthesis</keyword>
<keyword id="KW-0862">Zinc</keyword>
<comment type="function">
    <text evidence="1">Catalyzes the conversion of D-ribulose 5-phosphate to formate and 3,4-dihydroxy-2-butanone 4-phosphate.</text>
</comment>
<comment type="function">
    <text evidence="1">Catalyzes the conversion of GTP to 2,5-diamino-6-ribosylamino-4(3H)-pyrimidinone 5'-phosphate (DARP), formate and pyrophosphate.</text>
</comment>
<comment type="catalytic activity">
    <reaction evidence="1">
        <text>D-ribulose 5-phosphate = (2S)-2-hydroxy-3-oxobutyl phosphate + formate + H(+)</text>
        <dbReference type="Rhea" id="RHEA:18457"/>
        <dbReference type="ChEBI" id="CHEBI:15378"/>
        <dbReference type="ChEBI" id="CHEBI:15740"/>
        <dbReference type="ChEBI" id="CHEBI:58121"/>
        <dbReference type="ChEBI" id="CHEBI:58830"/>
        <dbReference type="EC" id="4.1.99.12"/>
    </reaction>
</comment>
<comment type="catalytic activity">
    <reaction evidence="1">
        <text>GTP + 4 H2O = 2,5-diamino-6-hydroxy-4-(5-phosphoribosylamino)-pyrimidine + formate + 2 phosphate + 3 H(+)</text>
        <dbReference type="Rhea" id="RHEA:23704"/>
        <dbReference type="ChEBI" id="CHEBI:15377"/>
        <dbReference type="ChEBI" id="CHEBI:15378"/>
        <dbReference type="ChEBI" id="CHEBI:15740"/>
        <dbReference type="ChEBI" id="CHEBI:37565"/>
        <dbReference type="ChEBI" id="CHEBI:43474"/>
        <dbReference type="ChEBI" id="CHEBI:58614"/>
        <dbReference type="EC" id="3.5.4.25"/>
    </reaction>
</comment>
<comment type="cofactor">
    <cofactor evidence="1">
        <name>Mg(2+)</name>
        <dbReference type="ChEBI" id="CHEBI:18420"/>
    </cofactor>
    <cofactor evidence="1">
        <name>Mn(2+)</name>
        <dbReference type="ChEBI" id="CHEBI:29035"/>
    </cofactor>
    <text evidence="1">Binds 2 divalent metal cations per subunit. Magnesium or manganese.</text>
</comment>
<comment type="cofactor">
    <cofactor evidence="1">
        <name>Zn(2+)</name>
        <dbReference type="ChEBI" id="CHEBI:29105"/>
    </cofactor>
    <text evidence="1">Binds 1 zinc ion per subunit.</text>
</comment>
<comment type="pathway">
    <text evidence="1">Cofactor biosynthesis; riboflavin biosynthesis; 2-hydroxy-3-oxobutyl phosphate from D-ribulose 5-phosphate: step 1/1.</text>
</comment>
<comment type="pathway">
    <text evidence="1">Cofactor biosynthesis; riboflavin biosynthesis; 5-amino-6-(D-ribitylamino)uracil from GTP: step 1/4.</text>
</comment>
<comment type="similarity">
    <text evidence="1">In the N-terminal section; belongs to the DHBP synthase family.</text>
</comment>
<comment type="similarity">
    <text evidence="1">In the C-terminal section; belongs to the GTP cyclohydrolase II family.</text>
</comment>
<accession>B2HP67</accession>
<feature type="chain" id="PRO_1000140366" description="Riboflavin biosynthesis protein RibBA">
    <location>
        <begin position="1"/>
        <end position="425"/>
    </location>
</feature>
<feature type="region of interest" description="DHBP synthase">
    <location>
        <begin position="1"/>
        <end position="204"/>
    </location>
</feature>
<feature type="region of interest" description="GTP cyclohydrolase II">
    <location>
        <begin position="205"/>
        <end position="425"/>
    </location>
</feature>
<feature type="active site" description="Proton acceptor; for GTP cyclohydrolase activity" evidence="1">
    <location>
        <position position="337"/>
    </location>
</feature>
<feature type="active site" description="Nucleophile; for GTP cyclohydrolase activity" evidence="1">
    <location>
        <position position="339"/>
    </location>
</feature>
<feature type="binding site" evidence="1">
    <location>
        <begin position="28"/>
        <end position="29"/>
    </location>
    <ligand>
        <name>D-ribulose 5-phosphate</name>
        <dbReference type="ChEBI" id="CHEBI:58121"/>
    </ligand>
</feature>
<feature type="binding site" evidence="1">
    <location>
        <position position="29"/>
    </location>
    <ligand>
        <name>Mg(2+)</name>
        <dbReference type="ChEBI" id="CHEBI:18420"/>
        <label>1</label>
    </ligand>
</feature>
<feature type="binding site" evidence="1">
    <location>
        <position position="29"/>
    </location>
    <ligand>
        <name>Mg(2+)</name>
        <dbReference type="ChEBI" id="CHEBI:18420"/>
        <label>2</label>
    </ligand>
</feature>
<feature type="binding site" evidence="1">
    <location>
        <position position="33"/>
    </location>
    <ligand>
        <name>D-ribulose 5-phosphate</name>
        <dbReference type="ChEBI" id="CHEBI:58121"/>
    </ligand>
</feature>
<feature type="binding site" evidence="1">
    <location>
        <begin position="141"/>
        <end position="145"/>
    </location>
    <ligand>
        <name>D-ribulose 5-phosphate</name>
        <dbReference type="ChEBI" id="CHEBI:58121"/>
    </ligand>
</feature>
<feature type="binding site" evidence="1">
    <location>
        <position position="144"/>
    </location>
    <ligand>
        <name>Mg(2+)</name>
        <dbReference type="ChEBI" id="CHEBI:18420"/>
        <label>2</label>
    </ligand>
</feature>
<feature type="binding site" evidence="1">
    <location>
        <position position="165"/>
    </location>
    <ligand>
        <name>D-ribulose 5-phosphate</name>
        <dbReference type="ChEBI" id="CHEBI:58121"/>
    </ligand>
</feature>
<feature type="binding site" evidence="1">
    <location>
        <begin position="259"/>
        <end position="263"/>
    </location>
    <ligand>
        <name>GTP</name>
        <dbReference type="ChEBI" id="CHEBI:37565"/>
    </ligand>
</feature>
<feature type="binding site" evidence="1">
    <location>
        <position position="264"/>
    </location>
    <ligand>
        <name>Zn(2+)</name>
        <dbReference type="ChEBI" id="CHEBI:29105"/>
        <note>catalytic</note>
    </ligand>
</feature>
<feature type="binding site" evidence="1">
    <location>
        <position position="275"/>
    </location>
    <ligand>
        <name>Zn(2+)</name>
        <dbReference type="ChEBI" id="CHEBI:29105"/>
        <note>catalytic</note>
    </ligand>
</feature>
<feature type="binding site" evidence="1">
    <location>
        <position position="277"/>
    </location>
    <ligand>
        <name>Zn(2+)</name>
        <dbReference type="ChEBI" id="CHEBI:29105"/>
        <note>catalytic</note>
    </ligand>
</feature>
<feature type="binding site" evidence="1">
    <location>
        <position position="280"/>
    </location>
    <ligand>
        <name>GTP</name>
        <dbReference type="ChEBI" id="CHEBI:37565"/>
    </ligand>
</feature>
<feature type="binding site" evidence="1">
    <location>
        <begin position="303"/>
        <end position="305"/>
    </location>
    <ligand>
        <name>GTP</name>
        <dbReference type="ChEBI" id="CHEBI:37565"/>
    </ligand>
</feature>
<feature type="binding site" evidence="1">
    <location>
        <position position="325"/>
    </location>
    <ligand>
        <name>GTP</name>
        <dbReference type="ChEBI" id="CHEBI:37565"/>
    </ligand>
</feature>
<feature type="binding site" evidence="1">
    <location>
        <position position="360"/>
    </location>
    <ligand>
        <name>GTP</name>
        <dbReference type="ChEBI" id="CHEBI:37565"/>
    </ligand>
</feature>
<feature type="binding site" evidence="1">
    <location>
        <position position="365"/>
    </location>
    <ligand>
        <name>GTP</name>
        <dbReference type="ChEBI" id="CHEBI:37565"/>
    </ligand>
</feature>
<feature type="site" description="Essential for DHBP synthase activity" evidence="1">
    <location>
        <position position="127"/>
    </location>
</feature>
<feature type="site" description="Essential for DHBP synthase activity" evidence="1">
    <location>
        <position position="165"/>
    </location>
</feature>
<protein>
    <recommendedName>
        <fullName evidence="1">Riboflavin biosynthesis protein RibBA</fullName>
    </recommendedName>
    <domain>
        <recommendedName>
            <fullName evidence="1">3,4-dihydroxy-2-butanone 4-phosphate synthase</fullName>
            <shortName evidence="1">DHBP synthase</shortName>
            <ecNumber evidence="1">4.1.99.12</ecNumber>
        </recommendedName>
    </domain>
    <domain>
        <recommendedName>
            <fullName evidence="1">GTP cyclohydrolase-2</fullName>
            <ecNumber evidence="1">3.5.4.25</ecNumber>
        </recommendedName>
        <alternativeName>
            <fullName evidence="1">GTP cyclohydrolase II</fullName>
        </alternativeName>
    </domain>
</protein>
<dbReference type="EC" id="4.1.99.12" evidence="1"/>
<dbReference type="EC" id="3.5.4.25" evidence="1"/>
<dbReference type="EMBL" id="CP000854">
    <property type="protein sequence ID" value="ACC40671.1"/>
    <property type="molecule type" value="Genomic_DNA"/>
</dbReference>
<dbReference type="RefSeq" id="WP_012393985.1">
    <property type="nucleotide sequence ID" value="NC_010612.1"/>
</dbReference>
<dbReference type="SMR" id="B2HP67"/>
<dbReference type="STRING" id="216594.MMAR_2222"/>
<dbReference type="KEGG" id="mmi:MMAR_2222"/>
<dbReference type="eggNOG" id="COG0108">
    <property type="taxonomic scope" value="Bacteria"/>
</dbReference>
<dbReference type="eggNOG" id="COG0807">
    <property type="taxonomic scope" value="Bacteria"/>
</dbReference>
<dbReference type="HOGENOM" id="CLU_020273_1_2_11"/>
<dbReference type="OrthoDB" id="9793111at2"/>
<dbReference type="UniPathway" id="UPA00275">
    <property type="reaction ID" value="UER00399"/>
</dbReference>
<dbReference type="UniPathway" id="UPA00275">
    <property type="reaction ID" value="UER00400"/>
</dbReference>
<dbReference type="Proteomes" id="UP000001190">
    <property type="component" value="Chromosome"/>
</dbReference>
<dbReference type="GO" id="GO:0005829">
    <property type="term" value="C:cytosol"/>
    <property type="evidence" value="ECO:0007669"/>
    <property type="project" value="TreeGrafter"/>
</dbReference>
<dbReference type="GO" id="GO:0008686">
    <property type="term" value="F:3,4-dihydroxy-2-butanone-4-phosphate synthase activity"/>
    <property type="evidence" value="ECO:0007669"/>
    <property type="project" value="UniProtKB-UniRule"/>
</dbReference>
<dbReference type="GO" id="GO:0005525">
    <property type="term" value="F:GTP binding"/>
    <property type="evidence" value="ECO:0007669"/>
    <property type="project" value="UniProtKB-KW"/>
</dbReference>
<dbReference type="GO" id="GO:0003935">
    <property type="term" value="F:GTP cyclohydrolase II activity"/>
    <property type="evidence" value="ECO:0007669"/>
    <property type="project" value="UniProtKB-UniRule"/>
</dbReference>
<dbReference type="GO" id="GO:0000287">
    <property type="term" value="F:magnesium ion binding"/>
    <property type="evidence" value="ECO:0007669"/>
    <property type="project" value="UniProtKB-UniRule"/>
</dbReference>
<dbReference type="GO" id="GO:0030145">
    <property type="term" value="F:manganese ion binding"/>
    <property type="evidence" value="ECO:0007669"/>
    <property type="project" value="UniProtKB-UniRule"/>
</dbReference>
<dbReference type="GO" id="GO:0008270">
    <property type="term" value="F:zinc ion binding"/>
    <property type="evidence" value="ECO:0007669"/>
    <property type="project" value="UniProtKB-UniRule"/>
</dbReference>
<dbReference type="GO" id="GO:0009231">
    <property type="term" value="P:riboflavin biosynthetic process"/>
    <property type="evidence" value="ECO:0007669"/>
    <property type="project" value="UniProtKB-UniRule"/>
</dbReference>
<dbReference type="CDD" id="cd00641">
    <property type="entry name" value="GTP_cyclohydro2"/>
    <property type="match status" value="1"/>
</dbReference>
<dbReference type="FunFam" id="3.40.50.10990:FF:000001">
    <property type="entry name" value="Riboflavin biosynthesis protein RibBA"/>
    <property type="match status" value="1"/>
</dbReference>
<dbReference type="FunFam" id="3.90.870.10:FF:000001">
    <property type="entry name" value="Riboflavin biosynthesis protein RibBA"/>
    <property type="match status" value="1"/>
</dbReference>
<dbReference type="Gene3D" id="3.90.870.10">
    <property type="entry name" value="DHBP synthase"/>
    <property type="match status" value="1"/>
</dbReference>
<dbReference type="Gene3D" id="3.40.50.10990">
    <property type="entry name" value="GTP cyclohydrolase II"/>
    <property type="match status" value="1"/>
</dbReference>
<dbReference type="HAMAP" id="MF_00179">
    <property type="entry name" value="RibA"/>
    <property type="match status" value="1"/>
</dbReference>
<dbReference type="HAMAP" id="MF_00180">
    <property type="entry name" value="RibB"/>
    <property type="match status" value="1"/>
</dbReference>
<dbReference type="HAMAP" id="MF_01283">
    <property type="entry name" value="RibBA"/>
    <property type="match status" value="1"/>
</dbReference>
<dbReference type="InterPro" id="IPR017945">
    <property type="entry name" value="DHBP_synth_RibB-like_a/b_dom"/>
</dbReference>
<dbReference type="InterPro" id="IPR000422">
    <property type="entry name" value="DHBP_synthase_RibB"/>
</dbReference>
<dbReference type="InterPro" id="IPR032677">
    <property type="entry name" value="GTP_cyclohydro_II"/>
</dbReference>
<dbReference type="InterPro" id="IPR000926">
    <property type="entry name" value="RibA"/>
</dbReference>
<dbReference type="InterPro" id="IPR036144">
    <property type="entry name" value="RibA-like_sf"/>
</dbReference>
<dbReference type="InterPro" id="IPR016299">
    <property type="entry name" value="Riboflavin_synth_RibBA"/>
</dbReference>
<dbReference type="NCBIfam" id="NF001591">
    <property type="entry name" value="PRK00393.1"/>
    <property type="match status" value="1"/>
</dbReference>
<dbReference type="NCBIfam" id="NF006803">
    <property type="entry name" value="PRK09311.1"/>
    <property type="match status" value="1"/>
</dbReference>
<dbReference type="NCBIfam" id="TIGR00505">
    <property type="entry name" value="ribA"/>
    <property type="match status" value="1"/>
</dbReference>
<dbReference type="NCBIfam" id="TIGR00506">
    <property type="entry name" value="ribB"/>
    <property type="match status" value="1"/>
</dbReference>
<dbReference type="PANTHER" id="PTHR21327:SF18">
    <property type="entry name" value="3,4-DIHYDROXY-2-BUTANONE 4-PHOSPHATE SYNTHASE"/>
    <property type="match status" value="1"/>
</dbReference>
<dbReference type="PANTHER" id="PTHR21327">
    <property type="entry name" value="GTP CYCLOHYDROLASE II-RELATED"/>
    <property type="match status" value="1"/>
</dbReference>
<dbReference type="Pfam" id="PF00926">
    <property type="entry name" value="DHBP_synthase"/>
    <property type="match status" value="1"/>
</dbReference>
<dbReference type="Pfam" id="PF00925">
    <property type="entry name" value="GTP_cyclohydro2"/>
    <property type="match status" value="1"/>
</dbReference>
<dbReference type="PIRSF" id="PIRSF001259">
    <property type="entry name" value="RibA"/>
    <property type="match status" value="1"/>
</dbReference>
<dbReference type="SUPFAM" id="SSF142695">
    <property type="entry name" value="RibA-like"/>
    <property type="match status" value="1"/>
</dbReference>
<dbReference type="SUPFAM" id="SSF55821">
    <property type="entry name" value="YrdC/RibB"/>
    <property type="match status" value="1"/>
</dbReference>
<reference key="1">
    <citation type="journal article" date="2008" name="Genome Res.">
        <title>Insights from the complete genome sequence of Mycobacterium marinum on the evolution of Mycobacterium tuberculosis.</title>
        <authorList>
            <person name="Stinear T.P."/>
            <person name="Seemann T."/>
            <person name="Harrison P.F."/>
            <person name="Jenkin G.A."/>
            <person name="Davies J.K."/>
            <person name="Johnson P.D."/>
            <person name="Abdellah Z."/>
            <person name="Arrowsmith C."/>
            <person name="Chillingworth T."/>
            <person name="Churcher C."/>
            <person name="Clarke K."/>
            <person name="Cronin A."/>
            <person name="Davis P."/>
            <person name="Goodhead I."/>
            <person name="Holroyd N."/>
            <person name="Jagels K."/>
            <person name="Lord A."/>
            <person name="Moule S."/>
            <person name="Mungall K."/>
            <person name="Norbertczak H."/>
            <person name="Quail M.A."/>
            <person name="Rabbinowitsch E."/>
            <person name="Walker D."/>
            <person name="White B."/>
            <person name="Whitehead S."/>
            <person name="Small P.L."/>
            <person name="Brosch R."/>
            <person name="Ramakrishnan L."/>
            <person name="Fischbach M.A."/>
            <person name="Parkhill J."/>
            <person name="Cole S.T."/>
        </authorList>
    </citation>
    <scope>NUCLEOTIDE SEQUENCE [LARGE SCALE GENOMIC DNA]</scope>
    <source>
        <strain>ATCC BAA-535 / M</strain>
    </source>
</reference>
<gene>
    <name evidence="1" type="primary">ribBA</name>
    <name type="ordered locus">MMAR_2222</name>
</gene>